<reference key="1">
    <citation type="journal article" date="2002" name="Nat. Genet.">
        <title>Genome sequence of the endocellular obligate symbiont of tsetse flies, Wigglesworthia glossinidia.</title>
        <authorList>
            <person name="Akman L."/>
            <person name="Yamashita A."/>
            <person name="Watanabe H."/>
            <person name="Oshima K."/>
            <person name="Shiba T."/>
            <person name="Hattori M."/>
            <person name="Aksoy S."/>
        </authorList>
    </citation>
    <scope>NUCLEOTIDE SEQUENCE [LARGE SCALE GENOMIC DNA]</scope>
</reference>
<evidence type="ECO:0000255" key="1">
    <source>
        <dbReference type="HAMAP-Rule" id="MF_00128"/>
    </source>
</evidence>
<proteinExistence type="inferred from homology"/>
<feature type="chain" id="PRO_0000164347" description="Protein NrdI">
    <location>
        <begin position="1"/>
        <end position="141"/>
    </location>
</feature>
<organism>
    <name type="scientific">Wigglesworthia glossinidia brevipalpis</name>
    <dbReference type="NCBI Taxonomy" id="36870"/>
    <lineage>
        <taxon>Bacteria</taxon>
        <taxon>Pseudomonadati</taxon>
        <taxon>Pseudomonadota</taxon>
        <taxon>Gammaproteobacteria</taxon>
        <taxon>Enterobacterales</taxon>
        <taxon>Erwiniaceae</taxon>
        <taxon>Wigglesworthia</taxon>
    </lineage>
</organism>
<protein>
    <recommendedName>
        <fullName evidence="1">Protein NrdI</fullName>
    </recommendedName>
</protein>
<gene>
    <name evidence="1" type="primary">nrdI</name>
    <name type="ordered locus">WIGBR6110</name>
</gene>
<accession>Q8D1U5</accession>
<comment type="function">
    <text evidence="1">Probably involved in ribonucleotide reductase function.</text>
</comment>
<comment type="similarity">
    <text evidence="1">Belongs to the NrdI family.</text>
</comment>
<dbReference type="EMBL" id="BA000021">
    <property type="protein sequence ID" value="BAC24757.1"/>
    <property type="molecule type" value="Genomic_DNA"/>
</dbReference>
<dbReference type="SMR" id="Q8D1U5"/>
<dbReference type="STRING" id="36870.gene:10369129"/>
<dbReference type="KEGG" id="wbr:nrdI"/>
<dbReference type="eggNOG" id="COG1780">
    <property type="taxonomic scope" value="Bacteria"/>
</dbReference>
<dbReference type="HOGENOM" id="CLU_114845_0_0_6"/>
<dbReference type="OrthoDB" id="350535at2"/>
<dbReference type="Proteomes" id="UP000000562">
    <property type="component" value="Chromosome"/>
</dbReference>
<dbReference type="GO" id="GO:0010181">
    <property type="term" value="F:FMN binding"/>
    <property type="evidence" value="ECO:0007669"/>
    <property type="project" value="InterPro"/>
</dbReference>
<dbReference type="GO" id="GO:0036211">
    <property type="term" value="P:protein modification process"/>
    <property type="evidence" value="ECO:0007669"/>
    <property type="project" value="InterPro"/>
</dbReference>
<dbReference type="Gene3D" id="3.40.50.360">
    <property type="match status" value="1"/>
</dbReference>
<dbReference type="HAMAP" id="MF_00128">
    <property type="entry name" value="NrdI"/>
    <property type="match status" value="1"/>
</dbReference>
<dbReference type="InterPro" id="IPR029039">
    <property type="entry name" value="Flavoprotein-like_sf"/>
</dbReference>
<dbReference type="InterPro" id="IPR020852">
    <property type="entry name" value="RNR_Ib_NrdI_bac"/>
</dbReference>
<dbReference type="InterPro" id="IPR004465">
    <property type="entry name" value="RNR_NrdI"/>
</dbReference>
<dbReference type="NCBIfam" id="TIGR00333">
    <property type="entry name" value="nrdI"/>
    <property type="match status" value="1"/>
</dbReference>
<dbReference type="PANTHER" id="PTHR37297">
    <property type="entry name" value="PROTEIN NRDI"/>
    <property type="match status" value="1"/>
</dbReference>
<dbReference type="PANTHER" id="PTHR37297:SF1">
    <property type="entry name" value="PROTEIN NRDI"/>
    <property type="match status" value="1"/>
</dbReference>
<dbReference type="Pfam" id="PF07972">
    <property type="entry name" value="Flavodoxin_NdrI"/>
    <property type="match status" value="1"/>
</dbReference>
<dbReference type="PIRSF" id="PIRSF005087">
    <property type="entry name" value="NrdI"/>
    <property type="match status" value="1"/>
</dbReference>
<dbReference type="SUPFAM" id="SSF52218">
    <property type="entry name" value="Flavoproteins"/>
    <property type="match status" value="1"/>
</dbReference>
<name>NRDI_WIGBR</name>
<sequence length="141" mass="16061">MSVLVYFSSSSENTHRFVKKLCIPAKRIPLIDKKEFQIKSPYILVIPSYNNGILDTAVPHQVTNFLNTLHNKFFLKGVIGSGNKNFGVNFCIAGNIISKKYKVPLLYKFELLGTNKDVINVKNGINKFWKKLNLEKKNQNA</sequence>
<keyword id="KW-1185">Reference proteome</keyword>